<proteinExistence type="inferred from homology"/>
<organism>
    <name type="scientific">Ruminiclostridium cellulolyticum (strain ATCC 35319 / DSM 5812 / JCM 6584 / H10)</name>
    <name type="common">Clostridium cellulolyticum</name>
    <dbReference type="NCBI Taxonomy" id="394503"/>
    <lineage>
        <taxon>Bacteria</taxon>
        <taxon>Bacillati</taxon>
        <taxon>Bacillota</taxon>
        <taxon>Clostridia</taxon>
        <taxon>Eubacteriales</taxon>
        <taxon>Oscillospiraceae</taxon>
        <taxon>Ruminiclostridium</taxon>
    </lineage>
</organism>
<gene>
    <name evidence="1" type="primary">ecfT</name>
    <name type="ordered locus">Ccel_0792</name>
</gene>
<evidence type="ECO:0000255" key="1">
    <source>
        <dbReference type="HAMAP-Rule" id="MF_01461"/>
    </source>
</evidence>
<sequence>MIRDITIGQYVPGNSLLHKADPRTKIILTFIMMIFIFLINTYWGYLLLTLFTAITVVSSNIPVKFVLKGLKPILFIVVFAGIINIFMIKGTVIWSWGFLSITYEGINVAIKMAIRLFLLIITASLLTYTTTPIALTDAIENLLAPLKRIKVPVHEIAMMMTIALRFIPTLLDETDKIIKAQSSRGADFDSGNMIERAKSFIPVLIPLFISAFRRADELATAMEARCYRGSEGRTRMKQLRFTRFDVLVTGITVVFMTWVILMEYVFF</sequence>
<feature type="chain" id="PRO_0000408986" description="Energy-coupling factor transporter transmembrane protein EcfT">
    <location>
        <begin position="1"/>
        <end position="267"/>
    </location>
</feature>
<feature type="transmembrane region" description="Helical" evidence="1">
    <location>
        <begin position="26"/>
        <end position="46"/>
    </location>
</feature>
<feature type="transmembrane region" description="Helical" evidence="1">
    <location>
        <begin position="73"/>
        <end position="93"/>
    </location>
</feature>
<feature type="transmembrane region" description="Helical" evidence="1">
    <location>
        <begin position="116"/>
        <end position="136"/>
    </location>
</feature>
<feature type="transmembrane region" description="Helical" evidence="1">
    <location>
        <begin position="151"/>
        <end position="171"/>
    </location>
</feature>
<feature type="transmembrane region" description="Helical" evidence="1">
    <location>
        <begin position="247"/>
        <end position="267"/>
    </location>
</feature>
<accession>B8I813</accession>
<keyword id="KW-1003">Cell membrane</keyword>
<keyword id="KW-0472">Membrane</keyword>
<keyword id="KW-1185">Reference proteome</keyword>
<keyword id="KW-0812">Transmembrane</keyword>
<keyword id="KW-1133">Transmembrane helix</keyword>
<keyword id="KW-0813">Transport</keyword>
<name>ECFT_RUMCH</name>
<dbReference type="EMBL" id="CP001348">
    <property type="protein sequence ID" value="ACL75170.1"/>
    <property type="molecule type" value="Genomic_DNA"/>
</dbReference>
<dbReference type="RefSeq" id="WP_015924332.1">
    <property type="nucleotide sequence ID" value="NC_011898.1"/>
</dbReference>
<dbReference type="SMR" id="B8I813"/>
<dbReference type="STRING" id="394503.Ccel_0792"/>
<dbReference type="KEGG" id="cce:Ccel_0792"/>
<dbReference type="eggNOG" id="COG0619">
    <property type="taxonomic scope" value="Bacteria"/>
</dbReference>
<dbReference type="HOGENOM" id="CLU_056469_2_2_9"/>
<dbReference type="OrthoDB" id="8075495at2"/>
<dbReference type="Proteomes" id="UP000001349">
    <property type="component" value="Chromosome"/>
</dbReference>
<dbReference type="GO" id="GO:0005886">
    <property type="term" value="C:plasma membrane"/>
    <property type="evidence" value="ECO:0007669"/>
    <property type="project" value="UniProtKB-SubCell"/>
</dbReference>
<dbReference type="GO" id="GO:0022857">
    <property type="term" value="F:transmembrane transporter activity"/>
    <property type="evidence" value="ECO:0007669"/>
    <property type="project" value="UniProtKB-UniRule"/>
</dbReference>
<dbReference type="CDD" id="cd16914">
    <property type="entry name" value="EcfT"/>
    <property type="match status" value="1"/>
</dbReference>
<dbReference type="HAMAP" id="MF_01461">
    <property type="entry name" value="EcfT"/>
    <property type="match status" value="1"/>
</dbReference>
<dbReference type="InterPro" id="IPR003339">
    <property type="entry name" value="ABC/ECF_trnsptr_transmembrane"/>
</dbReference>
<dbReference type="InterPro" id="IPR051611">
    <property type="entry name" value="ECF_transporter_component"/>
</dbReference>
<dbReference type="InterPro" id="IPR024919">
    <property type="entry name" value="EcfT"/>
</dbReference>
<dbReference type="PANTHER" id="PTHR34857">
    <property type="entry name" value="SLL0384 PROTEIN"/>
    <property type="match status" value="1"/>
</dbReference>
<dbReference type="PANTHER" id="PTHR34857:SF2">
    <property type="entry name" value="SLL0384 PROTEIN"/>
    <property type="match status" value="1"/>
</dbReference>
<dbReference type="Pfam" id="PF02361">
    <property type="entry name" value="CbiQ"/>
    <property type="match status" value="1"/>
</dbReference>
<protein>
    <recommendedName>
        <fullName evidence="1">Energy-coupling factor transporter transmembrane protein EcfT</fullName>
        <shortName evidence="1">ECF transporter T component EcfT</shortName>
    </recommendedName>
</protein>
<reference key="1">
    <citation type="submission" date="2009-01" db="EMBL/GenBank/DDBJ databases">
        <title>Complete sequence of Clostridium cellulolyticum H10.</title>
        <authorList>
            <consortium name="US DOE Joint Genome Institute"/>
            <person name="Lucas S."/>
            <person name="Copeland A."/>
            <person name="Lapidus A."/>
            <person name="Glavina del Rio T."/>
            <person name="Dalin E."/>
            <person name="Tice H."/>
            <person name="Bruce D."/>
            <person name="Goodwin L."/>
            <person name="Pitluck S."/>
            <person name="Chertkov O."/>
            <person name="Saunders E."/>
            <person name="Brettin T."/>
            <person name="Detter J.C."/>
            <person name="Han C."/>
            <person name="Larimer F."/>
            <person name="Land M."/>
            <person name="Hauser L."/>
            <person name="Kyrpides N."/>
            <person name="Ivanova N."/>
            <person name="Zhou J."/>
            <person name="Richardson P."/>
        </authorList>
    </citation>
    <scope>NUCLEOTIDE SEQUENCE [LARGE SCALE GENOMIC DNA]</scope>
    <source>
        <strain>ATCC 35319 / DSM 5812 / JCM 6584 / H10</strain>
    </source>
</reference>
<comment type="function">
    <text evidence="1">Transmembrane (T) component of an energy-coupling factor (ECF) ABC-transporter complex. Unlike classic ABC transporters this ECF transporter provides the energy necessary to transport a number of different substrates.</text>
</comment>
<comment type="subunit">
    <text evidence="1">Forms a stable energy-coupling factor (ECF) transporter complex composed of 2 membrane-embedded substrate-binding proteins (S component), 2 ATP-binding proteins (A component) and 2 transmembrane proteins (T component). May be able to interact with more than 1 S component at a time (By similarity).</text>
</comment>
<comment type="subcellular location">
    <subcellularLocation>
        <location evidence="1">Cell membrane</location>
        <topology evidence="1">Multi-pass membrane protein</topology>
    </subcellularLocation>
</comment>
<comment type="similarity">
    <text evidence="1">Belongs to the energy-coupling factor EcfT family.</text>
</comment>